<gene>
    <name type="primary">nlp-33</name>
    <name type="ORF">T19C4.7</name>
</gene>
<proteinExistence type="evidence at transcript level"/>
<protein>
    <recommendedName>
        <fullName>Neuropeptide-like protein 33</fullName>
    </recommendedName>
</protein>
<comment type="function">
    <text>May have antifungic activity against D.coniospora.</text>
</comment>
<comment type="subcellular location">
    <subcellularLocation>
        <location evidence="3">Secreted</location>
    </subcellularLocation>
</comment>
<comment type="tissue specificity">
    <text evidence="2">Expressed in hypoderm.</text>
</comment>
<comment type="induction">
    <text evidence="2">Strongly up-regulated upon D.coniospora infection.</text>
</comment>
<comment type="similarity">
    <text evidence="3">Belongs to the YARP (YGGW-amide related peptide) family.</text>
</comment>
<keyword id="KW-0027">Amidation</keyword>
<keyword id="KW-0929">Antimicrobial</keyword>
<keyword id="KW-0295">Fungicide</keyword>
<keyword id="KW-0527">Neuropeptide</keyword>
<keyword id="KW-1185">Reference proteome</keyword>
<keyword id="KW-0964">Secreted</keyword>
<keyword id="KW-0732">Signal</keyword>
<organism>
    <name type="scientific">Caenorhabditis elegans</name>
    <dbReference type="NCBI Taxonomy" id="6239"/>
    <lineage>
        <taxon>Eukaryota</taxon>
        <taxon>Metazoa</taxon>
        <taxon>Ecdysozoa</taxon>
        <taxon>Nematoda</taxon>
        <taxon>Chromadorea</taxon>
        <taxon>Rhabditida</taxon>
        <taxon>Rhabditina</taxon>
        <taxon>Rhabditomorpha</taxon>
        <taxon>Rhabditoidea</taxon>
        <taxon>Rhabditidae</taxon>
        <taxon>Peloderinae</taxon>
        <taxon>Caenorhabditis</taxon>
    </lineage>
</organism>
<evidence type="ECO:0000255" key="1"/>
<evidence type="ECO:0000269" key="2">
    <source>
    </source>
</evidence>
<evidence type="ECO:0000305" key="3"/>
<name>NLP33_CAEEL</name>
<sequence>MISTSLLLVVLLFAILAIVDAQWGYGGPYGGYGGGYGGGPWGYGGGWRRRHWGGYGGGPWGGYGGGPWGGYYGK</sequence>
<reference key="1">
    <citation type="journal article" date="1998" name="Science">
        <title>Genome sequence of the nematode C. elegans: a platform for investigating biology.</title>
        <authorList>
            <consortium name="The C. elegans sequencing consortium"/>
        </authorList>
    </citation>
    <scope>NUCLEOTIDE SEQUENCE [LARGE SCALE GENOMIC DNA]</scope>
    <source>
        <strain>Bristol N2</strain>
    </source>
</reference>
<reference key="2">
    <citation type="journal article" date="2004" name="Nat. Immunol.">
        <title>TLR-independent control of innate immunity in Caenorhabditis elegans by the TIR domain adaptor protein TIR-1, an ortholog of human SARM.</title>
        <authorList>
            <person name="Couillault C."/>
            <person name="Pujol N."/>
            <person name="Reboul J."/>
            <person name="Sabatier L."/>
            <person name="Guichou J.-F."/>
            <person name="Kohara Y."/>
            <person name="Ewbank J.J."/>
        </authorList>
    </citation>
    <scope>TISSUE SPECIFICITY</scope>
    <scope>INDUCTION</scope>
</reference>
<dbReference type="EMBL" id="Z75549">
    <property type="protein sequence ID" value="CAC42343.1"/>
    <property type="molecule type" value="Genomic_DNA"/>
</dbReference>
<dbReference type="RefSeq" id="NP_505834.1">
    <property type="nucleotide sequence ID" value="NM_073433.7"/>
</dbReference>
<dbReference type="SMR" id="Q95ZN4"/>
<dbReference type="FunCoup" id="Q95ZN4">
    <property type="interactions" value="816"/>
</dbReference>
<dbReference type="STRING" id="6239.T19C4.7.1"/>
<dbReference type="PaxDb" id="6239-T19C4.7"/>
<dbReference type="PeptideAtlas" id="Q95ZN4"/>
<dbReference type="EnsemblMetazoa" id="T19C4.7.1">
    <property type="protein sequence ID" value="T19C4.7.1"/>
    <property type="gene ID" value="WBGene00003771"/>
</dbReference>
<dbReference type="GeneID" id="179545"/>
<dbReference type="KEGG" id="cel:CELE_T19C4.7"/>
<dbReference type="UCSC" id="T19C4.7">
    <property type="organism name" value="c. elegans"/>
</dbReference>
<dbReference type="AGR" id="WB:WBGene00003771"/>
<dbReference type="CTD" id="179545"/>
<dbReference type="WormBase" id="T19C4.7">
    <property type="protein sequence ID" value="CE27777"/>
    <property type="gene ID" value="WBGene00003771"/>
    <property type="gene designation" value="nlp-33"/>
</dbReference>
<dbReference type="eggNOG" id="ENOG502TIA6">
    <property type="taxonomic scope" value="Eukaryota"/>
</dbReference>
<dbReference type="HOGENOM" id="CLU_193227_0_0_1"/>
<dbReference type="InParanoid" id="Q95ZN4"/>
<dbReference type="OMA" id="RHWGGPW"/>
<dbReference type="PRO" id="PR:Q95ZN4"/>
<dbReference type="Proteomes" id="UP000001940">
    <property type="component" value="Chromosome V"/>
</dbReference>
<dbReference type="Bgee" id="WBGene00003771">
    <property type="expression patterns" value="Expressed in larva and 4 other cell types or tissues"/>
</dbReference>
<dbReference type="GO" id="GO:0005576">
    <property type="term" value="C:extracellular region"/>
    <property type="evidence" value="ECO:0007669"/>
    <property type="project" value="UniProtKB-SubCell"/>
</dbReference>
<dbReference type="GO" id="GO:0050832">
    <property type="term" value="P:defense response to fungus"/>
    <property type="evidence" value="ECO:0000270"/>
    <property type="project" value="WormBase"/>
</dbReference>
<dbReference type="GO" id="GO:0045087">
    <property type="term" value="P:innate immune response"/>
    <property type="evidence" value="ECO:0000270"/>
    <property type="project" value="WormBase"/>
</dbReference>
<dbReference type="GO" id="GO:0031640">
    <property type="term" value="P:killing of cells of another organism"/>
    <property type="evidence" value="ECO:0007669"/>
    <property type="project" value="UniProtKB-KW"/>
</dbReference>
<dbReference type="GO" id="GO:0007218">
    <property type="term" value="P:neuropeptide signaling pathway"/>
    <property type="evidence" value="ECO:0007669"/>
    <property type="project" value="UniProtKB-KW"/>
</dbReference>
<accession>Q95ZN4</accession>
<feature type="signal peptide" evidence="1">
    <location>
        <begin position="1"/>
        <end position="21"/>
    </location>
</feature>
<feature type="chain" id="PRO_0000041521" description="Neuropeptide-like protein 33">
    <location>
        <begin position="22"/>
        <end position="72"/>
    </location>
</feature>
<feature type="modified residue" description="Tyrosine amide" evidence="1">
    <location>
        <position position="72"/>
    </location>
</feature>